<evidence type="ECO:0000255" key="1"/>
<evidence type="ECO:0000255" key="2">
    <source>
        <dbReference type="PROSITE-ProRule" id="PRU00273"/>
    </source>
</evidence>
<evidence type="ECO:0000305" key="3"/>
<organism>
    <name type="scientific">Pyrococcus horikoshii (strain ATCC 700860 / DSM 12428 / JCM 9974 / NBRC 100139 / OT-3)</name>
    <dbReference type="NCBI Taxonomy" id="70601"/>
    <lineage>
        <taxon>Archaea</taxon>
        <taxon>Methanobacteriati</taxon>
        <taxon>Methanobacteriota</taxon>
        <taxon>Thermococci</taxon>
        <taxon>Thermococcales</taxon>
        <taxon>Thermococcaceae</taxon>
        <taxon>Pyrococcus</taxon>
    </lineage>
</organism>
<name>DPOL_PYRHO</name>
<comment type="catalytic activity">
    <reaction>
        <text>DNA(n) + a 2'-deoxyribonucleoside 5'-triphosphate = DNA(n+1) + diphosphate</text>
        <dbReference type="Rhea" id="RHEA:22508"/>
        <dbReference type="Rhea" id="RHEA-COMP:17339"/>
        <dbReference type="Rhea" id="RHEA-COMP:17340"/>
        <dbReference type="ChEBI" id="CHEBI:33019"/>
        <dbReference type="ChEBI" id="CHEBI:61560"/>
        <dbReference type="ChEBI" id="CHEBI:173112"/>
        <dbReference type="EC" id="2.7.7.7"/>
    </reaction>
</comment>
<comment type="PTM">
    <text evidence="3">This protein undergoes a protein self splicing that involves a post-translational excision of the intervening region (intein) followed by peptide ligation.</text>
</comment>
<comment type="similarity">
    <text evidence="3">Belongs to the DNA polymerase type-B family.</text>
</comment>
<dbReference type="EC" id="2.7.7.7"/>
<dbReference type="EMBL" id="BA000001">
    <property type="protein sequence ID" value="BAA31074.1"/>
    <property type="molecule type" value="Genomic_DNA"/>
</dbReference>
<dbReference type="PIR" id="C71210">
    <property type="entry name" value="C71210"/>
</dbReference>
<dbReference type="RefSeq" id="WP_010886013.1">
    <property type="nucleotide sequence ID" value="NC_000961.1"/>
</dbReference>
<dbReference type="SMR" id="O59610"/>
<dbReference type="STRING" id="70601.gene:9378960"/>
<dbReference type="EnsemblBacteria" id="BAA31074">
    <property type="protein sequence ID" value="BAA31074"/>
    <property type="gene ID" value="BAA31074"/>
</dbReference>
<dbReference type="GeneID" id="1442795"/>
<dbReference type="KEGG" id="pho:PH1947"/>
<dbReference type="eggNOG" id="arCOG00328">
    <property type="taxonomic scope" value="Archaea"/>
</dbReference>
<dbReference type="eggNOG" id="arCOG03145">
    <property type="taxonomic scope" value="Archaea"/>
</dbReference>
<dbReference type="OrthoDB" id="323192at2157"/>
<dbReference type="BRENDA" id="2.7.7.7">
    <property type="organism ID" value="5244"/>
</dbReference>
<dbReference type="Proteomes" id="UP000000752">
    <property type="component" value="Chromosome"/>
</dbReference>
<dbReference type="GO" id="GO:0003677">
    <property type="term" value="F:DNA binding"/>
    <property type="evidence" value="ECO:0007669"/>
    <property type="project" value="UniProtKB-KW"/>
</dbReference>
<dbReference type="GO" id="GO:0003887">
    <property type="term" value="F:DNA-directed DNA polymerase activity"/>
    <property type="evidence" value="ECO:0007669"/>
    <property type="project" value="UniProtKB-KW"/>
</dbReference>
<dbReference type="GO" id="GO:0004519">
    <property type="term" value="F:endonuclease activity"/>
    <property type="evidence" value="ECO:0007669"/>
    <property type="project" value="InterPro"/>
</dbReference>
<dbReference type="GO" id="GO:0000166">
    <property type="term" value="F:nucleotide binding"/>
    <property type="evidence" value="ECO:0007669"/>
    <property type="project" value="InterPro"/>
</dbReference>
<dbReference type="GO" id="GO:0006261">
    <property type="term" value="P:DNA-templated DNA replication"/>
    <property type="evidence" value="ECO:0007669"/>
    <property type="project" value="TreeGrafter"/>
</dbReference>
<dbReference type="GO" id="GO:0016539">
    <property type="term" value="P:intein-mediated protein splicing"/>
    <property type="evidence" value="ECO:0007669"/>
    <property type="project" value="InterPro"/>
</dbReference>
<dbReference type="CDD" id="cd05780">
    <property type="entry name" value="DNA_polB_Kod1_like_exo"/>
    <property type="match status" value="1"/>
</dbReference>
<dbReference type="CDD" id="cd00081">
    <property type="entry name" value="Hint"/>
    <property type="match status" value="2"/>
</dbReference>
<dbReference type="FunFam" id="3.30.342.10:FF:000015">
    <property type="entry name" value="DNA polymerase"/>
    <property type="match status" value="1"/>
</dbReference>
<dbReference type="FunFam" id="1.10.132.60:FF:000013">
    <property type="entry name" value="DNA polymerase Pol2"/>
    <property type="match status" value="1"/>
</dbReference>
<dbReference type="Gene3D" id="1.10.132.60">
    <property type="entry name" value="DNA polymerase family B, C-terminal domain"/>
    <property type="match status" value="1"/>
</dbReference>
<dbReference type="Gene3D" id="3.30.342.10">
    <property type="entry name" value="DNA Polymerase, chain B, domain 1"/>
    <property type="match status" value="1"/>
</dbReference>
<dbReference type="Gene3D" id="2.170.16.10">
    <property type="entry name" value="Hedgehog/Intein (Hint) domain"/>
    <property type="match status" value="1"/>
</dbReference>
<dbReference type="Gene3D" id="3.10.28.10">
    <property type="entry name" value="Homing endonucleases"/>
    <property type="match status" value="1"/>
</dbReference>
<dbReference type="Gene3D" id="1.10.10.1010">
    <property type="entry name" value="Intein homing endonuclease, domain IV"/>
    <property type="match status" value="1"/>
</dbReference>
<dbReference type="Gene3D" id="3.90.1600.10">
    <property type="entry name" value="Palm domain of DNA polymerase"/>
    <property type="match status" value="2"/>
</dbReference>
<dbReference type="Gene3D" id="3.30.420.10">
    <property type="entry name" value="Ribonuclease H-like superfamily/Ribonuclease H"/>
    <property type="match status" value="1"/>
</dbReference>
<dbReference type="InterPro" id="IPR006172">
    <property type="entry name" value="DNA-dir_DNA_pol_B"/>
</dbReference>
<dbReference type="InterPro" id="IPR017964">
    <property type="entry name" value="DNA-dir_DNA_pol_B_CS"/>
</dbReference>
<dbReference type="InterPro" id="IPR006133">
    <property type="entry name" value="DNA-dir_DNA_pol_B_exonuc"/>
</dbReference>
<dbReference type="InterPro" id="IPR006134">
    <property type="entry name" value="DNA-dir_DNA_pol_B_multi_dom"/>
</dbReference>
<dbReference type="InterPro" id="IPR043502">
    <property type="entry name" value="DNA/RNA_pol_sf"/>
</dbReference>
<dbReference type="InterPro" id="IPR042087">
    <property type="entry name" value="DNA_pol_B_thumb"/>
</dbReference>
<dbReference type="InterPro" id="IPR023211">
    <property type="entry name" value="DNA_pol_palm_dom_sf"/>
</dbReference>
<dbReference type="InterPro" id="IPR050240">
    <property type="entry name" value="DNA_pol_type-B"/>
</dbReference>
<dbReference type="InterPro" id="IPR003586">
    <property type="entry name" value="Hint_dom_C"/>
</dbReference>
<dbReference type="InterPro" id="IPR003587">
    <property type="entry name" value="Hint_dom_N"/>
</dbReference>
<dbReference type="InterPro" id="IPR036844">
    <property type="entry name" value="Hint_dom_sf"/>
</dbReference>
<dbReference type="InterPro" id="IPR027434">
    <property type="entry name" value="Homing_endonucl"/>
</dbReference>
<dbReference type="InterPro" id="IPR006142">
    <property type="entry name" value="INTEIN"/>
</dbReference>
<dbReference type="InterPro" id="IPR030934">
    <property type="entry name" value="Intein_C"/>
</dbReference>
<dbReference type="InterPro" id="IPR004042">
    <property type="entry name" value="Intein_endonuc_central"/>
</dbReference>
<dbReference type="InterPro" id="IPR006141">
    <property type="entry name" value="Intein_N"/>
</dbReference>
<dbReference type="InterPro" id="IPR041005">
    <property type="entry name" value="PI-TkoII_IV"/>
</dbReference>
<dbReference type="InterPro" id="IPR012337">
    <property type="entry name" value="RNaseH-like_sf"/>
</dbReference>
<dbReference type="InterPro" id="IPR036397">
    <property type="entry name" value="RNaseH_sf"/>
</dbReference>
<dbReference type="NCBIfam" id="TIGR01443">
    <property type="entry name" value="intein_Cterm"/>
    <property type="match status" value="1"/>
</dbReference>
<dbReference type="NCBIfam" id="TIGR01445">
    <property type="entry name" value="intein_Nterm"/>
    <property type="match status" value="1"/>
</dbReference>
<dbReference type="NCBIfam" id="TIGR00592">
    <property type="entry name" value="pol2"/>
    <property type="match status" value="2"/>
</dbReference>
<dbReference type="PANTHER" id="PTHR10322">
    <property type="entry name" value="DNA POLYMERASE CATALYTIC SUBUNIT"/>
    <property type="match status" value="1"/>
</dbReference>
<dbReference type="PANTHER" id="PTHR10322:SF23">
    <property type="entry name" value="DNA POLYMERASE DELTA CATALYTIC SUBUNIT"/>
    <property type="match status" value="1"/>
</dbReference>
<dbReference type="Pfam" id="PF00136">
    <property type="entry name" value="DNA_pol_B"/>
    <property type="match status" value="2"/>
</dbReference>
<dbReference type="Pfam" id="PF03104">
    <property type="entry name" value="DNA_pol_B_exo1"/>
    <property type="match status" value="1"/>
</dbReference>
<dbReference type="Pfam" id="PF14890">
    <property type="entry name" value="Intein_splicing"/>
    <property type="match status" value="1"/>
</dbReference>
<dbReference type="Pfam" id="PF18714">
    <property type="entry name" value="PI-TkoII_IV"/>
    <property type="match status" value="1"/>
</dbReference>
<dbReference type="PRINTS" id="PR00106">
    <property type="entry name" value="DNAPOLB"/>
</dbReference>
<dbReference type="PRINTS" id="PR00379">
    <property type="entry name" value="INTEIN"/>
</dbReference>
<dbReference type="SMART" id="SM00305">
    <property type="entry name" value="HintC"/>
    <property type="match status" value="1"/>
</dbReference>
<dbReference type="SMART" id="SM00306">
    <property type="entry name" value="HintN"/>
    <property type="match status" value="1"/>
</dbReference>
<dbReference type="SMART" id="SM00486">
    <property type="entry name" value="POLBc"/>
    <property type="match status" value="1"/>
</dbReference>
<dbReference type="SUPFAM" id="SSF56672">
    <property type="entry name" value="DNA/RNA polymerases"/>
    <property type="match status" value="2"/>
</dbReference>
<dbReference type="SUPFAM" id="SSF51294">
    <property type="entry name" value="Hedgehog/intein (Hint) domain"/>
    <property type="match status" value="1"/>
</dbReference>
<dbReference type="SUPFAM" id="SSF55608">
    <property type="entry name" value="Homing endonucleases"/>
    <property type="match status" value="1"/>
</dbReference>
<dbReference type="SUPFAM" id="SSF53098">
    <property type="entry name" value="Ribonuclease H-like"/>
    <property type="match status" value="1"/>
</dbReference>
<dbReference type="PROSITE" id="PS00116">
    <property type="entry name" value="DNA_POLYMERASE_B"/>
    <property type="match status" value="1"/>
</dbReference>
<dbReference type="PROSITE" id="PS50818">
    <property type="entry name" value="INTEIN_C_TER"/>
    <property type="match status" value="1"/>
</dbReference>
<dbReference type="PROSITE" id="PS50819">
    <property type="entry name" value="INTEIN_ENDONUCLEASE"/>
    <property type="match status" value="1"/>
</dbReference>
<dbReference type="PROSITE" id="PS50817">
    <property type="entry name" value="INTEIN_N_TER"/>
    <property type="match status" value="1"/>
</dbReference>
<keyword id="KW-0068">Autocatalytic cleavage</keyword>
<keyword id="KW-0235">DNA replication</keyword>
<keyword id="KW-0238">DNA-binding</keyword>
<keyword id="KW-0239">DNA-directed DNA polymerase</keyword>
<keyword id="KW-0548">Nucleotidyltransferase</keyword>
<keyword id="KW-0651">Protein splicing</keyword>
<keyword id="KW-0808">Transferase</keyword>
<gene>
    <name type="primary">pol</name>
    <name type="ordered locus">PH1947</name>
    <name type="ORF">PHBT047</name>
</gene>
<reference key="1">
    <citation type="journal article" date="1998" name="DNA Res.">
        <title>Complete sequence and gene organization of the genome of a hyper-thermophilic archaebacterium, Pyrococcus horikoshii OT3.</title>
        <authorList>
            <person name="Kawarabayasi Y."/>
            <person name="Sawada M."/>
            <person name="Horikawa H."/>
            <person name="Haikawa Y."/>
            <person name="Hino Y."/>
            <person name="Yamamoto S."/>
            <person name="Sekine M."/>
            <person name="Baba S."/>
            <person name="Kosugi H."/>
            <person name="Hosoyama A."/>
            <person name="Nagai Y."/>
            <person name="Sakai M."/>
            <person name="Ogura K."/>
            <person name="Otsuka R."/>
            <person name="Nakazawa H."/>
            <person name="Takamiya M."/>
            <person name="Ohfuku Y."/>
            <person name="Funahashi T."/>
            <person name="Tanaka T."/>
            <person name="Kudoh Y."/>
            <person name="Yamazaki J."/>
            <person name="Kushida N."/>
            <person name="Oguchi A."/>
            <person name="Aoki K."/>
            <person name="Yoshizawa T."/>
            <person name="Nakamura Y."/>
            <person name="Robb F.T."/>
            <person name="Horikoshi K."/>
            <person name="Masuchi Y."/>
            <person name="Shizuya H."/>
            <person name="Kikuchi H."/>
        </authorList>
    </citation>
    <scope>NUCLEOTIDE SEQUENCE [LARGE SCALE GENOMIC DNA]</scope>
    <source>
        <strain>ATCC 700860 / DSM 12428 / JCM 9974 / NBRC 100139 / OT-3</strain>
    </source>
</reference>
<sequence>MILDADYITEDGKPIIRIFKKENGEFKVEYDRNFRPYIYALLRDDSAIDEIKKITAQRHGKVVRIVETEKIQRKFLGRPIEVWKLYLEHPQDVPAIRDKIREHPAVVDIFEYDIPFAKRYLIDKGLTPMEGNEKLTFLAVDIETLYHEGEEFGKGPVIMISYADEEGAKVITWKKIDLPYVEVVSSEREMIKRLIRVIKEKDPDVIITYNGDNFDFPYLLKRAEKLGIKLLLGRDNSEPKMQKMGDSLAVEIKGRIHFDLFPVIRRTINLPTYTLEAVYEAIFGKPKEKVYADEIAKAWETGEGLERVAKYSMEDAKVTYELGREFFPMEAQLARLVGQPVWDVSRSSTGNLVEWFLLRKAYERNELAPNKPDEKEYERRLRESYEGGYVKEPEKGLWEGIVSLDFRSLYPSIIITHNVSPDTLNREGCEEYDVAPKVGHRFCKDFPGFIPSLLGQLLEERQKIKKRMKESKDPVEKKLLDYRQRAIKILANSILPDEWLPIVENEKVRFVKIGDFIDREIEENAERVKRDGETEILEVKDLKALSFNRETKKSELKKVKALIRHRYSGKVYSIKLKSGRRIKITSGHSLFSVKNGKLVKVRGDELKPGDLVVVPGRLKLPESKQVLNLVELLLKLPEEETSNIVMMIPVKGRKNFFKGMLKTLYWIFGEGERPRTAGRYLKHLERLGYVKLKRRGCEVLDWESLKRYRKLYETLIKNLKYNGNSRAYMVEFNSLRDVVSLMPIEELKEWIIGEPRGPKIGTFIDVDDSFAKLLGYYISSGDVEKDRVKFHSKDQNVLEDIAKLAEKLFGKVRRGRGYIEVSGKISHAIFRVLAEGKRIPEFIFTSPMDIKVAFLKGLNGNAEELTFSTKSELLVNQLILLLNSIGVSDIKIEHEKGVYRVYINKKESSNGDIVLDSVESIEVEKYEGYVYDLSVEDNENFLVGFGLLYAHNSYYGYYGYAKARWYCKECAESVTAWGRQYIDLVRRELEARGFKVLYIDTDGLYATIPGVKDWEEVKRRALEFVDYINSKLPGVLELEYEGFYARGFFVTKKKYALIDEEGKIVTRGLEIVRRDWSEIAKETQARVLEAILKHGNVEEAVKIVKDVTEKLTNYEVPPEKLVIYEQITRPINEYKAIGPHVAVAKRLMARGIKVKPGMVIGYIVLRGDGPISKRAISIEEFDPRKHKYDAEYYIENQVLPAVERILKAFGYKREDLRWQKTKQVGLGAWIKVKKS</sequence>
<feature type="chain" id="PRO_0000007322" description="DNA polymerase, 1st part" evidence="1">
    <location>
        <begin position="1"/>
        <end position="492"/>
    </location>
</feature>
<feature type="chain" id="PRO_0000007323" description="Pho pol intein" evidence="1">
    <location>
        <begin position="493"/>
        <end position="952"/>
    </location>
</feature>
<feature type="chain" id="PRO_0000007324" description="DNA polymerase, 2nd part" evidence="1">
    <location>
        <begin position="953"/>
        <end position="1235"/>
    </location>
</feature>
<feature type="domain" description="DOD-type homing endonuclease" evidence="2">
    <location>
        <begin position="773"/>
        <end position="887"/>
    </location>
</feature>
<protein>
    <recommendedName>
        <fullName>DNA polymerase</fullName>
        <ecNumber>2.7.7.7</ecNumber>
    </recommendedName>
    <component>
        <recommendedName>
            <fullName>Pho pol intein</fullName>
        </recommendedName>
        <alternativeName>
            <fullName>Pho Pol I intein</fullName>
        </alternativeName>
    </component>
</protein>
<proteinExistence type="inferred from homology"/>
<accession>O59610</accession>